<proteinExistence type="inferred from homology"/>
<reference key="1">
    <citation type="journal article" date="2005" name="Nature">
        <title>Genome sequencing and analysis of Aspergillus oryzae.</title>
        <authorList>
            <person name="Machida M."/>
            <person name="Asai K."/>
            <person name="Sano M."/>
            <person name="Tanaka T."/>
            <person name="Kumagai T."/>
            <person name="Terai G."/>
            <person name="Kusumoto K."/>
            <person name="Arima T."/>
            <person name="Akita O."/>
            <person name="Kashiwagi Y."/>
            <person name="Abe K."/>
            <person name="Gomi K."/>
            <person name="Horiuchi H."/>
            <person name="Kitamoto K."/>
            <person name="Kobayashi T."/>
            <person name="Takeuchi M."/>
            <person name="Denning D.W."/>
            <person name="Galagan J.E."/>
            <person name="Nierman W.C."/>
            <person name="Yu J."/>
            <person name="Archer D.B."/>
            <person name="Bennett J.W."/>
            <person name="Bhatnagar D."/>
            <person name="Cleveland T.E."/>
            <person name="Fedorova N.D."/>
            <person name="Gotoh O."/>
            <person name="Horikawa H."/>
            <person name="Hosoyama A."/>
            <person name="Ichinomiya M."/>
            <person name="Igarashi R."/>
            <person name="Iwashita K."/>
            <person name="Juvvadi P.R."/>
            <person name="Kato M."/>
            <person name="Kato Y."/>
            <person name="Kin T."/>
            <person name="Kokubun A."/>
            <person name="Maeda H."/>
            <person name="Maeyama N."/>
            <person name="Maruyama J."/>
            <person name="Nagasaki H."/>
            <person name="Nakajima T."/>
            <person name="Oda K."/>
            <person name="Okada K."/>
            <person name="Paulsen I."/>
            <person name="Sakamoto K."/>
            <person name="Sawano T."/>
            <person name="Takahashi M."/>
            <person name="Takase K."/>
            <person name="Terabayashi Y."/>
            <person name="Wortman J.R."/>
            <person name="Yamada O."/>
            <person name="Yamagata Y."/>
            <person name="Anazawa H."/>
            <person name="Hata Y."/>
            <person name="Koide Y."/>
            <person name="Komori T."/>
            <person name="Koyama Y."/>
            <person name="Minetoki T."/>
            <person name="Suharnan S."/>
            <person name="Tanaka A."/>
            <person name="Isono K."/>
            <person name="Kuhara S."/>
            <person name="Ogasawara N."/>
            <person name="Kikuchi H."/>
        </authorList>
    </citation>
    <scope>NUCLEOTIDE SEQUENCE [LARGE SCALE GENOMIC DNA]</scope>
    <source>
        <strain>ATCC 42149 / RIB 40</strain>
    </source>
</reference>
<comment type="function">
    <text evidence="1">May be involved in cellular response to stress. Required to maintain mitochondrial DNA (mtDNA) integrity and stability (By similarity).</text>
</comment>
<comment type="subcellular location">
    <subcellularLocation>
        <location evidence="1">Mitochondrion inner membrane</location>
        <topology evidence="1">Multi-pass membrane protein</topology>
    </subcellularLocation>
</comment>
<comment type="similarity">
    <text evidence="3">Belongs to the peroxisomal membrane protein PXMP2/4 family.</text>
</comment>
<gene>
    <name type="primary">sym1</name>
    <name type="ORF">AO090010000224</name>
</gene>
<protein>
    <recommendedName>
        <fullName>Protein sym1</fullName>
    </recommendedName>
</protein>
<feature type="chain" id="PRO_0000234407" description="Protein sym1">
    <location>
        <begin position="1"/>
        <end position="173"/>
    </location>
</feature>
<feature type="transmembrane region" description="Helical" evidence="2">
    <location>
        <begin position="12"/>
        <end position="32"/>
    </location>
</feature>
<feature type="transmembrane region" description="Helical" evidence="2">
    <location>
        <begin position="52"/>
        <end position="72"/>
    </location>
</feature>
<feature type="transmembrane region" description="Helical" evidence="2">
    <location>
        <begin position="129"/>
        <end position="149"/>
    </location>
</feature>
<feature type="transmembrane region" description="Helical" evidence="2">
    <location>
        <begin position="151"/>
        <end position="171"/>
    </location>
</feature>
<keyword id="KW-0472">Membrane</keyword>
<keyword id="KW-0496">Mitochondrion</keyword>
<keyword id="KW-0999">Mitochondrion inner membrane</keyword>
<keyword id="KW-1185">Reference proteome</keyword>
<keyword id="KW-0812">Transmembrane</keyword>
<keyword id="KW-1133">Transmembrane helix</keyword>
<dbReference type="EMBL" id="BA000056">
    <property type="protein sequence ID" value="BAE66121.1"/>
    <property type="molecule type" value="Genomic_DNA"/>
</dbReference>
<dbReference type="RefSeq" id="XP_001827254.1">
    <property type="nucleotide sequence ID" value="XM_001827202.2"/>
</dbReference>
<dbReference type="STRING" id="510516.Q2TXA2"/>
<dbReference type="EnsemblFungi" id="BAE66121">
    <property type="protein sequence ID" value="BAE66121"/>
    <property type="gene ID" value="AO090010000224"/>
</dbReference>
<dbReference type="GeneID" id="5999388"/>
<dbReference type="KEGG" id="aor:AO090010000224"/>
<dbReference type="VEuPathDB" id="FungiDB:AO090010000224"/>
<dbReference type="HOGENOM" id="CLU_049109_8_1_1"/>
<dbReference type="OMA" id="WYQSKLA"/>
<dbReference type="OrthoDB" id="8023at5052"/>
<dbReference type="Proteomes" id="UP000006564">
    <property type="component" value="Chromosome 8"/>
</dbReference>
<dbReference type="GO" id="GO:0005743">
    <property type="term" value="C:mitochondrial inner membrane"/>
    <property type="evidence" value="ECO:0007669"/>
    <property type="project" value="UniProtKB-SubCell"/>
</dbReference>
<dbReference type="GO" id="GO:0006067">
    <property type="term" value="P:ethanol metabolic process"/>
    <property type="evidence" value="ECO:0007669"/>
    <property type="project" value="EnsemblFungi"/>
</dbReference>
<dbReference type="InterPro" id="IPR007248">
    <property type="entry name" value="Mpv17_PMP22"/>
</dbReference>
<dbReference type="PANTHER" id="PTHR11266">
    <property type="entry name" value="PEROXISOMAL MEMBRANE PROTEIN 2, PXMP2 MPV17"/>
    <property type="match status" value="1"/>
</dbReference>
<dbReference type="PANTHER" id="PTHR11266:SF17">
    <property type="entry name" value="PROTEIN MPV17"/>
    <property type="match status" value="1"/>
</dbReference>
<dbReference type="Pfam" id="PF04117">
    <property type="entry name" value="Mpv17_PMP22"/>
    <property type="match status" value="1"/>
</dbReference>
<name>SYM1_ASPOR</name>
<organism>
    <name type="scientific">Aspergillus oryzae (strain ATCC 42149 / RIB 40)</name>
    <name type="common">Yellow koji mold</name>
    <dbReference type="NCBI Taxonomy" id="510516"/>
    <lineage>
        <taxon>Eukaryota</taxon>
        <taxon>Fungi</taxon>
        <taxon>Dikarya</taxon>
        <taxon>Ascomycota</taxon>
        <taxon>Pezizomycotina</taxon>
        <taxon>Eurotiomycetes</taxon>
        <taxon>Eurotiomycetidae</taxon>
        <taxon>Eurotiales</taxon>
        <taxon>Aspergillaceae</taxon>
        <taxon>Aspergillus</taxon>
        <taxon>Aspergillus subgen. Circumdati</taxon>
    </lineage>
</organism>
<sequence length="173" mass="19146">MFRWYQAKLAKQPILTASVTSAVLFGSGDVLAQQVVDRKGLEKHDFARTGRMALYGGAIFGPAATTWFGFLQRNVVLKNSKATIVARVAADQCLFTPTHLTCFLTSMAIMEGSDPIEKWRNSFLPSYKANLTIWPLVQGVNFSIVPLEYRVLVVNLVSLGWNCLLSMINSGDK</sequence>
<accession>Q2TXA2</accession>
<evidence type="ECO:0000250" key="1"/>
<evidence type="ECO:0000255" key="2"/>
<evidence type="ECO:0000305" key="3"/>